<evidence type="ECO:0000255" key="1">
    <source>
        <dbReference type="HAMAP-Rule" id="MF_00052"/>
    </source>
</evidence>
<evidence type="ECO:0000255" key="2">
    <source>
        <dbReference type="PROSITE-ProRule" id="PRU01319"/>
    </source>
</evidence>
<gene>
    <name evidence="1" type="primary">rnhB</name>
    <name type="ordered locus">RER_24590</name>
</gene>
<dbReference type="EC" id="3.1.26.4" evidence="1"/>
<dbReference type="EMBL" id="AP008957">
    <property type="protein sequence ID" value="BAH33167.1"/>
    <property type="molecule type" value="Genomic_DNA"/>
</dbReference>
<dbReference type="SMR" id="C0ZXT2"/>
<dbReference type="KEGG" id="rer:RER_24590"/>
<dbReference type="eggNOG" id="COG0164">
    <property type="taxonomic scope" value="Bacteria"/>
</dbReference>
<dbReference type="HOGENOM" id="CLU_036532_1_0_11"/>
<dbReference type="Proteomes" id="UP000002204">
    <property type="component" value="Chromosome"/>
</dbReference>
<dbReference type="GO" id="GO:0005737">
    <property type="term" value="C:cytoplasm"/>
    <property type="evidence" value="ECO:0007669"/>
    <property type="project" value="UniProtKB-SubCell"/>
</dbReference>
<dbReference type="GO" id="GO:0032299">
    <property type="term" value="C:ribonuclease H2 complex"/>
    <property type="evidence" value="ECO:0007669"/>
    <property type="project" value="TreeGrafter"/>
</dbReference>
<dbReference type="GO" id="GO:0030145">
    <property type="term" value="F:manganese ion binding"/>
    <property type="evidence" value="ECO:0007669"/>
    <property type="project" value="UniProtKB-UniRule"/>
</dbReference>
<dbReference type="GO" id="GO:0003723">
    <property type="term" value="F:RNA binding"/>
    <property type="evidence" value="ECO:0007669"/>
    <property type="project" value="InterPro"/>
</dbReference>
<dbReference type="GO" id="GO:0004523">
    <property type="term" value="F:RNA-DNA hybrid ribonuclease activity"/>
    <property type="evidence" value="ECO:0007669"/>
    <property type="project" value="UniProtKB-UniRule"/>
</dbReference>
<dbReference type="GO" id="GO:0043137">
    <property type="term" value="P:DNA replication, removal of RNA primer"/>
    <property type="evidence" value="ECO:0007669"/>
    <property type="project" value="TreeGrafter"/>
</dbReference>
<dbReference type="GO" id="GO:0006298">
    <property type="term" value="P:mismatch repair"/>
    <property type="evidence" value="ECO:0007669"/>
    <property type="project" value="TreeGrafter"/>
</dbReference>
<dbReference type="CDD" id="cd07182">
    <property type="entry name" value="RNase_HII_bacteria_HII_like"/>
    <property type="match status" value="1"/>
</dbReference>
<dbReference type="FunFam" id="3.30.420.10:FF:000113">
    <property type="entry name" value="Ribonuclease HII"/>
    <property type="match status" value="1"/>
</dbReference>
<dbReference type="Gene3D" id="3.30.420.10">
    <property type="entry name" value="Ribonuclease H-like superfamily/Ribonuclease H"/>
    <property type="match status" value="1"/>
</dbReference>
<dbReference type="HAMAP" id="MF_00052_B">
    <property type="entry name" value="RNase_HII_B"/>
    <property type="match status" value="1"/>
</dbReference>
<dbReference type="InterPro" id="IPR022898">
    <property type="entry name" value="RNase_HII"/>
</dbReference>
<dbReference type="InterPro" id="IPR001352">
    <property type="entry name" value="RNase_HII/HIII"/>
</dbReference>
<dbReference type="InterPro" id="IPR024567">
    <property type="entry name" value="RNase_HII/HIII_dom"/>
</dbReference>
<dbReference type="InterPro" id="IPR012337">
    <property type="entry name" value="RNaseH-like_sf"/>
</dbReference>
<dbReference type="InterPro" id="IPR036397">
    <property type="entry name" value="RNaseH_sf"/>
</dbReference>
<dbReference type="NCBIfam" id="NF000595">
    <property type="entry name" value="PRK00015.1-3"/>
    <property type="match status" value="1"/>
</dbReference>
<dbReference type="NCBIfam" id="NF000598">
    <property type="entry name" value="PRK00015.2-2"/>
    <property type="match status" value="1"/>
</dbReference>
<dbReference type="NCBIfam" id="NF000600">
    <property type="entry name" value="PRK00015.2-4"/>
    <property type="match status" value="1"/>
</dbReference>
<dbReference type="PANTHER" id="PTHR10954">
    <property type="entry name" value="RIBONUCLEASE H2 SUBUNIT A"/>
    <property type="match status" value="1"/>
</dbReference>
<dbReference type="PANTHER" id="PTHR10954:SF18">
    <property type="entry name" value="RIBONUCLEASE HII"/>
    <property type="match status" value="1"/>
</dbReference>
<dbReference type="Pfam" id="PF01351">
    <property type="entry name" value="RNase_HII"/>
    <property type="match status" value="1"/>
</dbReference>
<dbReference type="SUPFAM" id="SSF53098">
    <property type="entry name" value="Ribonuclease H-like"/>
    <property type="match status" value="1"/>
</dbReference>
<dbReference type="PROSITE" id="PS51975">
    <property type="entry name" value="RNASE_H_2"/>
    <property type="match status" value="1"/>
</dbReference>
<organism>
    <name type="scientific">Rhodococcus erythropolis (strain PR4 / NBRC 100887)</name>
    <dbReference type="NCBI Taxonomy" id="234621"/>
    <lineage>
        <taxon>Bacteria</taxon>
        <taxon>Bacillati</taxon>
        <taxon>Actinomycetota</taxon>
        <taxon>Actinomycetes</taxon>
        <taxon>Mycobacteriales</taxon>
        <taxon>Nocardiaceae</taxon>
        <taxon>Rhodococcus</taxon>
        <taxon>Rhodococcus erythropolis group</taxon>
    </lineage>
</organism>
<sequence>MSSWPPRVVIRRSAGLRTMESALARTGLGPVAGVDEAGRGACAGPLVIAACVLAPKPQAALARLDDSKKLTERAREELFPAIKRLALAWSVVSVPAAEVDQIGIHVANIEGMRRAVAGLDLEPGYVLTDGFRVPGLTAPSLPVIGGDGAAACIAAASVLAKVTRDRVMTEMDETHPGYGFAIHKGYSTPLHMDALDELGPCPEHRMTYANVVAAGVRLEQRAGRTG</sequence>
<keyword id="KW-0963">Cytoplasm</keyword>
<keyword id="KW-0255">Endonuclease</keyword>
<keyword id="KW-0378">Hydrolase</keyword>
<keyword id="KW-0464">Manganese</keyword>
<keyword id="KW-0479">Metal-binding</keyword>
<keyword id="KW-0540">Nuclease</keyword>
<name>RNH2_RHOE4</name>
<protein>
    <recommendedName>
        <fullName evidence="1">Ribonuclease HII</fullName>
        <shortName evidence="1">RNase HII</shortName>
        <ecNumber evidence="1">3.1.26.4</ecNumber>
    </recommendedName>
</protein>
<comment type="function">
    <text evidence="1">Endonuclease that specifically degrades the RNA of RNA-DNA hybrids.</text>
</comment>
<comment type="catalytic activity">
    <reaction evidence="1">
        <text>Endonucleolytic cleavage to 5'-phosphomonoester.</text>
        <dbReference type="EC" id="3.1.26.4"/>
    </reaction>
</comment>
<comment type="cofactor">
    <cofactor evidence="1">
        <name>Mn(2+)</name>
        <dbReference type="ChEBI" id="CHEBI:29035"/>
    </cofactor>
    <cofactor evidence="1">
        <name>Mg(2+)</name>
        <dbReference type="ChEBI" id="CHEBI:18420"/>
    </cofactor>
    <text evidence="1">Manganese or magnesium. Binds 1 divalent metal ion per monomer in the absence of substrate. May bind a second metal ion after substrate binding.</text>
</comment>
<comment type="subcellular location">
    <subcellularLocation>
        <location evidence="1">Cytoplasm</location>
    </subcellularLocation>
</comment>
<comment type="similarity">
    <text evidence="1">Belongs to the RNase HII family.</text>
</comment>
<reference key="1">
    <citation type="submission" date="2005-03" db="EMBL/GenBank/DDBJ databases">
        <title>Comparison of the complete genome sequences of Rhodococcus erythropolis PR4 and Rhodococcus opacus B4.</title>
        <authorList>
            <person name="Takarada H."/>
            <person name="Sekine M."/>
            <person name="Hosoyama A."/>
            <person name="Yamada R."/>
            <person name="Fujisawa T."/>
            <person name="Omata S."/>
            <person name="Shimizu A."/>
            <person name="Tsukatani N."/>
            <person name="Tanikawa S."/>
            <person name="Fujita N."/>
            <person name="Harayama S."/>
        </authorList>
    </citation>
    <scope>NUCLEOTIDE SEQUENCE [LARGE SCALE GENOMIC DNA]</scope>
    <source>
        <strain>PR4 / NBRC 100887</strain>
    </source>
</reference>
<feature type="chain" id="PRO_1000202290" description="Ribonuclease HII">
    <location>
        <begin position="1"/>
        <end position="226"/>
    </location>
</feature>
<feature type="domain" description="RNase H type-2" evidence="2">
    <location>
        <begin position="29"/>
        <end position="220"/>
    </location>
</feature>
<feature type="binding site" evidence="1">
    <location>
        <position position="35"/>
    </location>
    <ligand>
        <name>a divalent metal cation</name>
        <dbReference type="ChEBI" id="CHEBI:60240"/>
    </ligand>
</feature>
<feature type="binding site" evidence="1">
    <location>
        <position position="36"/>
    </location>
    <ligand>
        <name>a divalent metal cation</name>
        <dbReference type="ChEBI" id="CHEBI:60240"/>
    </ligand>
</feature>
<feature type="binding site" evidence="1">
    <location>
        <position position="129"/>
    </location>
    <ligand>
        <name>a divalent metal cation</name>
        <dbReference type="ChEBI" id="CHEBI:60240"/>
    </ligand>
</feature>
<proteinExistence type="inferred from homology"/>
<accession>C0ZXT2</accession>